<gene>
    <name evidence="1" type="primary">emtA</name>
    <name type="synonym">mltE</name>
    <name type="synonym">sltZ</name>
    <name type="synonym">ycgP</name>
    <name type="ordered locus">b1193</name>
    <name type="ordered locus">JW5821</name>
</gene>
<keyword id="KW-0002">3D-structure</keyword>
<keyword id="KW-0998">Cell outer membrane</keyword>
<keyword id="KW-0961">Cell wall biogenesis/degradation</keyword>
<keyword id="KW-0449">Lipoprotein</keyword>
<keyword id="KW-0456">Lyase</keyword>
<keyword id="KW-0472">Membrane</keyword>
<keyword id="KW-0564">Palmitate</keyword>
<keyword id="KW-1185">Reference proteome</keyword>
<keyword id="KW-0732">Signal</keyword>
<sequence>MKLRWFAFLIVLLAGCSSKHDYTNPPWNAKVPVQRAMQWMPISQKAGAAWGVDPQLITAIIAIESGGNPNAVSKSNAIGLMQLKASTSGRDVYRRMGWSGEPTTSELKNPERNISMGAAYLNILETGPLAGIEDPKVLQYALVVSYANGAGALLRTFSSDRKKAISKINDLDADEFLEHVARNHPAPQAPRYIYKLEQALDAM</sequence>
<reference key="1">
    <citation type="journal article" date="1996" name="DNA Res.">
        <title>A 718-kb DNA sequence of the Escherichia coli K-12 genome corresponding to the 12.7-28.0 min region on the linkage map.</title>
        <authorList>
            <person name="Oshima T."/>
            <person name="Aiba H."/>
            <person name="Baba T."/>
            <person name="Fujita K."/>
            <person name="Hayashi K."/>
            <person name="Honjo A."/>
            <person name="Ikemoto K."/>
            <person name="Inada T."/>
            <person name="Itoh T."/>
            <person name="Kajihara M."/>
            <person name="Kanai K."/>
            <person name="Kashimoto K."/>
            <person name="Kimura S."/>
            <person name="Kitagawa M."/>
            <person name="Makino K."/>
            <person name="Masuda S."/>
            <person name="Miki T."/>
            <person name="Mizobuchi K."/>
            <person name="Mori H."/>
            <person name="Motomura K."/>
            <person name="Nakamura Y."/>
            <person name="Nashimoto H."/>
            <person name="Nishio Y."/>
            <person name="Saito N."/>
            <person name="Sampei G."/>
            <person name="Seki Y."/>
            <person name="Tagami H."/>
            <person name="Takemoto K."/>
            <person name="Wada C."/>
            <person name="Yamamoto Y."/>
            <person name="Yano M."/>
            <person name="Horiuchi T."/>
        </authorList>
    </citation>
    <scope>NUCLEOTIDE SEQUENCE [LARGE SCALE GENOMIC DNA]</scope>
    <source>
        <strain>K12 / W3110 / ATCC 27325 / DSM 5911</strain>
    </source>
</reference>
<reference key="2">
    <citation type="journal article" date="1997" name="Science">
        <title>The complete genome sequence of Escherichia coli K-12.</title>
        <authorList>
            <person name="Blattner F.R."/>
            <person name="Plunkett G. III"/>
            <person name="Bloch C.A."/>
            <person name="Perna N.T."/>
            <person name="Burland V."/>
            <person name="Riley M."/>
            <person name="Collado-Vides J."/>
            <person name="Glasner J.D."/>
            <person name="Rode C.K."/>
            <person name="Mayhew G.F."/>
            <person name="Gregor J."/>
            <person name="Davis N.W."/>
            <person name="Kirkpatrick H.A."/>
            <person name="Goeden M.A."/>
            <person name="Rose D.J."/>
            <person name="Mau B."/>
            <person name="Shao Y."/>
        </authorList>
    </citation>
    <scope>NUCLEOTIDE SEQUENCE [LARGE SCALE GENOMIC DNA]</scope>
    <source>
        <strain>K12 / MG1655 / ATCC 47076</strain>
    </source>
</reference>
<reference key="3">
    <citation type="journal article" date="2006" name="Mol. Syst. Biol.">
        <title>Highly accurate genome sequences of Escherichia coli K-12 strains MG1655 and W3110.</title>
        <authorList>
            <person name="Hayashi K."/>
            <person name="Morooka N."/>
            <person name="Yamamoto Y."/>
            <person name="Fujita K."/>
            <person name="Isono K."/>
            <person name="Choi S."/>
            <person name="Ohtsubo E."/>
            <person name="Baba T."/>
            <person name="Wanner B.L."/>
            <person name="Mori H."/>
            <person name="Horiuchi T."/>
        </authorList>
    </citation>
    <scope>NUCLEOTIDE SEQUENCE [LARGE SCALE GENOMIC DNA]</scope>
    <source>
        <strain>K12 / W3110 / ATCC 27325 / DSM 5911</strain>
    </source>
</reference>
<reference key="4">
    <citation type="journal article" date="1998" name="J. Bacteriol.">
        <title>Membrane-bound lytic endotransglycosylase in Escherichia coli.</title>
        <authorList>
            <person name="Kraft A.R."/>
            <person name="Templin M.F."/>
            <person name="Hoeltje J.V."/>
        </authorList>
    </citation>
    <scope>IDENTIFICATION</scope>
    <scope>PALMITOYLATION AT CYS-16</scope>
    <scope>SUBCELLULAR LOCATION</scope>
    <scope>CHARACTERIZATION AS AN ENDO-TYPE TRANSGLYCOSYLASE</scope>
    <source>
        <strain>K12 / MC1061 / ATCC 53338 / DSM 7140</strain>
    </source>
</reference>
<dbReference type="EC" id="4.2.2.n2" evidence="1"/>
<dbReference type="EMBL" id="U00096">
    <property type="protein sequence ID" value="AAC74277.2"/>
    <property type="molecule type" value="Genomic_DNA"/>
</dbReference>
<dbReference type="EMBL" id="AP009048">
    <property type="protein sequence ID" value="BAA36051.2"/>
    <property type="molecule type" value="Genomic_DNA"/>
</dbReference>
<dbReference type="PIR" id="F64865">
    <property type="entry name" value="F64865"/>
</dbReference>
<dbReference type="RefSeq" id="NP_415711.2">
    <property type="nucleotide sequence ID" value="NC_000913.3"/>
</dbReference>
<dbReference type="RefSeq" id="WP_001301104.1">
    <property type="nucleotide sequence ID" value="NZ_SSZK01000010.1"/>
</dbReference>
<dbReference type="PDB" id="2Y8P">
    <property type="method" value="X-ray"/>
    <property type="resolution" value="2.00 A"/>
    <property type="chains" value="A/B=19-203"/>
</dbReference>
<dbReference type="PDB" id="3T36">
    <property type="method" value="X-ray"/>
    <property type="resolution" value="2.25 A"/>
    <property type="chains" value="A/B/C/D/E=17-203"/>
</dbReference>
<dbReference type="PDB" id="4HJV">
    <property type="method" value="X-ray"/>
    <property type="resolution" value="2.30 A"/>
    <property type="chains" value="A/B/C/D/E=17-203"/>
</dbReference>
<dbReference type="PDB" id="4HJY">
    <property type="method" value="X-ray"/>
    <property type="resolution" value="2.40 A"/>
    <property type="chains" value="A/B=17-203"/>
</dbReference>
<dbReference type="PDB" id="4HJZ">
    <property type="method" value="X-ray"/>
    <property type="resolution" value="1.90 A"/>
    <property type="chains" value="A/B=17-203"/>
</dbReference>
<dbReference type="PDB" id="6GHY">
    <property type="method" value="X-ray"/>
    <property type="resolution" value="2.12 A"/>
    <property type="chains" value="A/B=19-203"/>
</dbReference>
<dbReference type="PDB" id="6GHZ">
    <property type="method" value="X-ray"/>
    <property type="resolution" value="2.33 A"/>
    <property type="chains" value="A/B=19-203"/>
</dbReference>
<dbReference type="PDB" id="6GI3">
    <property type="method" value="X-ray"/>
    <property type="resolution" value="1.38 A"/>
    <property type="chains" value="B=19-203"/>
</dbReference>
<dbReference type="PDB" id="6GI4">
    <property type="method" value="X-ray"/>
    <property type="resolution" value="1.35 A"/>
    <property type="chains" value="B=19-203"/>
</dbReference>
<dbReference type="PDBsum" id="2Y8P"/>
<dbReference type="PDBsum" id="3T36"/>
<dbReference type="PDBsum" id="4HJV"/>
<dbReference type="PDBsum" id="4HJY"/>
<dbReference type="PDBsum" id="4HJZ"/>
<dbReference type="PDBsum" id="6GHY"/>
<dbReference type="PDBsum" id="6GHZ"/>
<dbReference type="PDBsum" id="6GI3"/>
<dbReference type="PDBsum" id="6GI4"/>
<dbReference type="SMR" id="P0C960"/>
<dbReference type="BioGRID" id="4259642">
    <property type="interactions" value="361"/>
</dbReference>
<dbReference type="BioGRID" id="850027">
    <property type="interactions" value="2"/>
</dbReference>
<dbReference type="FunCoup" id="P0C960">
    <property type="interactions" value="1"/>
</dbReference>
<dbReference type="IntAct" id="P0C960">
    <property type="interactions" value="2"/>
</dbReference>
<dbReference type="STRING" id="511145.b1193"/>
<dbReference type="CAZy" id="GH23">
    <property type="family name" value="Glycoside Hydrolase Family 23"/>
</dbReference>
<dbReference type="PaxDb" id="511145-b1193"/>
<dbReference type="EnsemblBacteria" id="AAC74277">
    <property type="protein sequence ID" value="AAC74277"/>
    <property type="gene ID" value="b1193"/>
</dbReference>
<dbReference type="GeneID" id="93776239"/>
<dbReference type="GeneID" id="945655"/>
<dbReference type="KEGG" id="ecj:JW5821"/>
<dbReference type="KEGG" id="eco:b1193"/>
<dbReference type="KEGG" id="ecoc:C3026_07020"/>
<dbReference type="PATRIC" id="fig|1411691.4.peg.1093"/>
<dbReference type="EchoBASE" id="EB3656"/>
<dbReference type="eggNOG" id="COG0741">
    <property type="taxonomic scope" value="Bacteria"/>
</dbReference>
<dbReference type="HOGENOM" id="CLU_103257_0_0_6"/>
<dbReference type="InParanoid" id="P0C960"/>
<dbReference type="OMA" id="EVYRYMG"/>
<dbReference type="OrthoDB" id="92254at2"/>
<dbReference type="PhylomeDB" id="P0C960"/>
<dbReference type="BioCyc" id="EcoCyc:G6622-MONOMER"/>
<dbReference type="BioCyc" id="MetaCyc:G6622-MONOMER"/>
<dbReference type="BRENDA" id="4.2.2.B6">
    <property type="organism ID" value="2026"/>
</dbReference>
<dbReference type="EvolutionaryTrace" id="P0C960"/>
<dbReference type="PRO" id="PR:P0C960"/>
<dbReference type="Proteomes" id="UP000000625">
    <property type="component" value="Chromosome"/>
</dbReference>
<dbReference type="GO" id="GO:0009279">
    <property type="term" value="C:cell outer membrane"/>
    <property type="evidence" value="ECO:0000255"/>
    <property type="project" value="EcoCyc"/>
</dbReference>
<dbReference type="GO" id="GO:0008932">
    <property type="term" value="F:lytic endotransglycosylase activity"/>
    <property type="evidence" value="ECO:0000314"/>
    <property type="project" value="EcoCyc"/>
</dbReference>
<dbReference type="GO" id="GO:0008933">
    <property type="term" value="F:peptidoglycan lytic transglycosylase activity"/>
    <property type="evidence" value="ECO:0000314"/>
    <property type="project" value="EcoCyc"/>
</dbReference>
<dbReference type="GO" id="GO:0051301">
    <property type="term" value="P:cell division"/>
    <property type="evidence" value="ECO:0000269"/>
    <property type="project" value="EcoCyc"/>
</dbReference>
<dbReference type="GO" id="GO:0016998">
    <property type="term" value="P:cell wall macromolecule catabolic process"/>
    <property type="evidence" value="ECO:0007669"/>
    <property type="project" value="UniProtKB-UniRule"/>
</dbReference>
<dbReference type="GO" id="GO:0071555">
    <property type="term" value="P:cell wall organization"/>
    <property type="evidence" value="ECO:0007669"/>
    <property type="project" value="UniProtKB-KW"/>
</dbReference>
<dbReference type="GO" id="GO:0000270">
    <property type="term" value="P:peptidoglycan metabolic process"/>
    <property type="evidence" value="ECO:0007669"/>
    <property type="project" value="InterPro"/>
</dbReference>
<dbReference type="CDD" id="cd16893">
    <property type="entry name" value="LT_MltC_MltE"/>
    <property type="match status" value="1"/>
</dbReference>
<dbReference type="FunFam" id="1.10.530.10:FF:000007">
    <property type="entry name" value="Endo-type membrane-bound lytic murein transglycosylase A"/>
    <property type="match status" value="1"/>
</dbReference>
<dbReference type="Gene3D" id="1.10.530.10">
    <property type="match status" value="1"/>
</dbReference>
<dbReference type="HAMAP" id="MF_01381">
    <property type="entry name" value="EmtA"/>
    <property type="match status" value="1"/>
</dbReference>
<dbReference type="InterPro" id="IPR023946">
    <property type="entry name" value="EmtA"/>
</dbReference>
<dbReference type="InterPro" id="IPR023346">
    <property type="entry name" value="Lysozyme-like_dom_sf"/>
</dbReference>
<dbReference type="InterPro" id="IPR000189">
    <property type="entry name" value="Transglyc_AS"/>
</dbReference>
<dbReference type="InterPro" id="IPR008258">
    <property type="entry name" value="Transglycosylase_SLT_dom_1"/>
</dbReference>
<dbReference type="NCBIfam" id="NF012014">
    <property type="entry name" value="PRK15470.1"/>
    <property type="match status" value="1"/>
</dbReference>
<dbReference type="PANTHER" id="PTHR37423:SF4">
    <property type="entry name" value="ENDO-TYPE MEMBRANE-BOUND LYTIC MUREIN TRANSGLYCOSYLASE A"/>
    <property type="match status" value="1"/>
</dbReference>
<dbReference type="PANTHER" id="PTHR37423">
    <property type="entry name" value="SOLUBLE LYTIC MUREIN TRANSGLYCOSYLASE-RELATED"/>
    <property type="match status" value="1"/>
</dbReference>
<dbReference type="Pfam" id="PF01464">
    <property type="entry name" value="SLT"/>
    <property type="match status" value="1"/>
</dbReference>
<dbReference type="SUPFAM" id="SSF53955">
    <property type="entry name" value="Lysozyme-like"/>
    <property type="match status" value="1"/>
</dbReference>
<dbReference type="PROSITE" id="PS51257">
    <property type="entry name" value="PROKAR_LIPOPROTEIN"/>
    <property type="match status" value="1"/>
</dbReference>
<dbReference type="PROSITE" id="PS00922">
    <property type="entry name" value="TRANSGLYCOSYLASE"/>
    <property type="match status" value="1"/>
</dbReference>
<feature type="signal peptide" evidence="1">
    <location>
        <begin position="1"/>
        <end position="15"/>
    </location>
</feature>
<feature type="chain" id="PRO_0000196568" description="Endo-type membrane-bound lytic murein transglycosylase A">
    <location>
        <begin position="16"/>
        <end position="203"/>
    </location>
</feature>
<feature type="lipid moiety-binding region" description="N-palmitoyl cysteine" evidence="2">
    <location>
        <position position="16"/>
    </location>
</feature>
<feature type="lipid moiety-binding region" description="S-diacylglycerol cysteine" evidence="1">
    <location>
        <position position="16"/>
    </location>
</feature>
<feature type="helix" evidence="3">
    <location>
        <begin position="30"/>
        <end position="37"/>
    </location>
</feature>
<feature type="helix" evidence="3">
    <location>
        <begin position="40"/>
        <end position="50"/>
    </location>
</feature>
<feature type="helix" evidence="3">
    <location>
        <begin position="54"/>
        <end position="64"/>
    </location>
</feature>
<feature type="turn" evidence="3">
    <location>
        <begin position="65"/>
        <end position="67"/>
    </location>
</feature>
<feature type="turn" evidence="3">
    <location>
        <begin position="74"/>
        <end position="76"/>
    </location>
</feature>
<feature type="turn" evidence="3">
    <location>
        <begin position="79"/>
        <end position="82"/>
    </location>
</feature>
<feature type="turn" evidence="3">
    <location>
        <begin position="85"/>
        <end position="87"/>
    </location>
</feature>
<feature type="helix" evidence="3">
    <location>
        <begin position="88"/>
        <end position="95"/>
    </location>
</feature>
<feature type="helix" evidence="3">
    <location>
        <begin position="104"/>
        <end position="108"/>
    </location>
</feature>
<feature type="helix" evidence="3">
    <location>
        <begin position="110"/>
        <end position="126"/>
    </location>
</feature>
<feature type="turn" evidence="3">
    <location>
        <begin position="127"/>
        <end position="131"/>
    </location>
</feature>
<feature type="helix" evidence="3">
    <location>
        <begin position="135"/>
        <end position="148"/>
    </location>
</feature>
<feature type="helix" evidence="3">
    <location>
        <begin position="150"/>
        <end position="155"/>
    </location>
</feature>
<feature type="helix" evidence="3">
    <location>
        <begin position="161"/>
        <end position="168"/>
    </location>
</feature>
<feature type="helix" evidence="3">
    <location>
        <begin position="173"/>
        <end position="183"/>
    </location>
</feature>
<feature type="helix" evidence="3">
    <location>
        <begin position="188"/>
        <end position="203"/>
    </location>
</feature>
<accession>P0C960</accession>
<accession>O87500</accession>
<accession>P76009</accession>
<accession>P94775</accession>
<comment type="function">
    <text>Murein-degrading enzyme. May play a role in recycling of muropeptides during cell elongation and/or cell division. Preferentially cleaves at a distance of more than two disaccharide units from the ends of the glycan chain. Prefers cross-linked murein in vivo.</text>
</comment>
<comment type="catalytic activity">
    <reaction evidence="1">
        <text>Endolytic cleavage of the (1-&gt;4)-beta-glycosidic linkage between N-acetylmuramic acid (MurNAc) and N-acetylglucosamine (GlcNAc) residues in peptidoglycan with concomitant formation of a 1,6-anhydrobond in the MurNAc residue.</text>
        <dbReference type="EC" id="4.2.2.n2"/>
    </reaction>
</comment>
<comment type="subcellular location">
    <subcellularLocation>
        <location evidence="2">Cell outer membrane</location>
        <topology evidence="2">Lipid-anchor</topology>
    </subcellularLocation>
</comment>
<comment type="PTM">
    <text>The N-terminus is blocked.</text>
</comment>
<comment type="similarity">
    <text evidence="1">Belongs to the transglycosylase Slt family.</text>
</comment>
<evidence type="ECO:0000255" key="1">
    <source>
        <dbReference type="HAMAP-Rule" id="MF_01381"/>
    </source>
</evidence>
<evidence type="ECO:0000305" key="2">
    <source>
    </source>
</evidence>
<evidence type="ECO:0007829" key="3">
    <source>
        <dbReference type="PDB" id="6GI4"/>
    </source>
</evidence>
<protein>
    <recommendedName>
        <fullName evidence="1">Endo-type membrane-bound lytic murein transglycosylase A</fullName>
        <ecNumber evidence="1">4.2.2.n2</ecNumber>
    </recommendedName>
    <alternativeName>
        <fullName evidence="1">Peptidoglycan lytic endotransglycosylase</fullName>
    </alternativeName>
</protein>
<organism>
    <name type="scientific">Escherichia coli (strain K12)</name>
    <dbReference type="NCBI Taxonomy" id="83333"/>
    <lineage>
        <taxon>Bacteria</taxon>
        <taxon>Pseudomonadati</taxon>
        <taxon>Pseudomonadota</taxon>
        <taxon>Gammaproteobacteria</taxon>
        <taxon>Enterobacterales</taxon>
        <taxon>Enterobacteriaceae</taxon>
        <taxon>Escherichia</taxon>
    </lineage>
</organism>
<name>EMTA_ECOLI</name>
<proteinExistence type="evidence at protein level"/>